<sequence length="403" mass="44161">MSKFNRIHLVVLDSVGIGAAPDANNFVNAGVPDGASDTLGHISKTVGLNVPNMAKIGLGNIPRETPLKTVAAEINPTGYATKLEEVSLGKDTMTGHWEIMGLNITEPFDTFWNGFPEEILTKIEEFSGRKVIREANKPYSGTAVIDDFGPRQMETGELIIYTSADPVLQIAAHEDIIPLDELYRICEYARSITLERPALLGRIIARPYVGEPGNFTRTANRRDLAVSPFSPTVLDKLNEADIDTYAVGKINDIFNGAGINHDMGHNKSNSHGIDTLLKTMGLAEFEKGFSFTNLVDFDALYGHRRNAHGYRDCLHEFDERLPEIIAAMRENDLLLITADHGNDPTYAGTDHTREYIPLLAYSPAFKGNGLIPVGHFADISATVADNFGVETAMIGESFLDKLV</sequence>
<gene>
    <name evidence="1" type="primary">deoB</name>
    <name type="ordered locus">SPG_0750</name>
</gene>
<proteinExistence type="inferred from homology"/>
<organism>
    <name type="scientific">Streptococcus pneumoniae serotype 19F (strain G54)</name>
    <dbReference type="NCBI Taxonomy" id="512566"/>
    <lineage>
        <taxon>Bacteria</taxon>
        <taxon>Bacillati</taxon>
        <taxon>Bacillota</taxon>
        <taxon>Bacilli</taxon>
        <taxon>Lactobacillales</taxon>
        <taxon>Streptococcaceae</taxon>
        <taxon>Streptococcus</taxon>
    </lineage>
</organism>
<reference key="1">
    <citation type="journal article" date="2001" name="Microb. Drug Resist.">
        <title>Annotated draft genomic sequence from a Streptococcus pneumoniae type 19F clinical isolate.</title>
        <authorList>
            <person name="Dopazo J."/>
            <person name="Mendoza A."/>
            <person name="Herrero J."/>
            <person name="Caldara F."/>
            <person name="Humbert Y."/>
            <person name="Friedli L."/>
            <person name="Guerrier M."/>
            <person name="Grand-Schenk E."/>
            <person name="Gandin C."/>
            <person name="de Francesco M."/>
            <person name="Polissi A."/>
            <person name="Buell G."/>
            <person name="Feger G."/>
            <person name="Garcia E."/>
            <person name="Peitsch M."/>
            <person name="Garcia-Bustos J.F."/>
        </authorList>
    </citation>
    <scope>NUCLEOTIDE SEQUENCE [LARGE SCALE GENOMIC DNA]</scope>
    <source>
        <strain>G54</strain>
    </source>
</reference>
<reference key="2">
    <citation type="submission" date="2008-03" db="EMBL/GenBank/DDBJ databases">
        <title>Pneumococcal beta glucoside metabolism investigated by whole genome comparison.</title>
        <authorList>
            <person name="Mulas L."/>
            <person name="Trappetti C."/>
            <person name="Hakenbeck R."/>
            <person name="Iannelli F."/>
            <person name="Pozzi G."/>
            <person name="Davidsen T.M."/>
            <person name="Tettelin H."/>
            <person name="Oggioni M."/>
        </authorList>
    </citation>
    <scope>NUCLEOTIDE SEQUENCE [LARGE SCALE GENOMIC DNA]</scope>
    <source>
        <strain>G54</strain>
    </source>
</reference>
<protein>
    <recommendedName>
        <fullName evidence="1">Phosphopentomutase</fullName>
        <ecNumber evidence="1">5.4.2.7</ecNumber>
    </recommendedName>
    <alternativeName>
        <fullName evidence="1">Phosphodeoxyribomutase</fullName>
    </alternativeName>
</protein>
<dbReference type="EC" id="5.4.2.7" evidence="1"/>
<dbReference type="EMBL" id="CP001015">
    <property type="protein sequence ID" value="ACF55188.1"/>
    <property type="molecule type" value="Genomic_DNA"/>
</dbReference>
<dbReference type="SMR" id="B5E3K2"/>
<dbReference type="KEGG" id="spx:SPG_0750"/>
<dbReference type="HOGENOM" id="CLU_053861_0_0_9"/>
<dbReference type="UniPathway" id="UPA00002">
    <property type="reaction ID" value="UER00467"/>
</dbReference>
<dbReference type="GO" id="GO:0005829">
    <property type="term" value="C:cytosol"/>
    <property type="evidence" value="ECO:0007669"/>
    <property type="project" value="TreeGrafter"/>
</dbReference>
<dbReference type="GO" id="GO:0000287">
    <property type="term" value="F:magnesium ion binding"/>
    <property type="evidence" value="ECO:0007669"/>
    <property type="project" value="InterPro"/>
</dbReference>
<dbReference type="GO" id="GO:0030145">
    <property type="term" value="F:manganese ion binding"/>
    <property type="evidence" value="ECO:0007669"/>
    <property type="project" value="UniProtKB-UniRule"/>
</dbReference>
<dbReference type="GO" id="GO:0008973">
    <property type="term" value="F:phosphopentomutase activity"/>
    <property type="evidence" value="ECO:0007669"/>
    <property type="project" value="UniProtKB-UniRule"/>
</dbReference>
<dbReference type="GO" id="GO:0006018">
    <property type="term" value="P:2-deoxyribose 1-phosphate catabolic process"/>
    <property type="evidence" value="ECO:0007669"/>
    <property type="project" value="UniProtKB-UniRule"/>
</dbReference>
<dbReference type="GO" id="GO:0006015">
    <property type="term" value="P:5-phosphoribose 1-diphosphate biosynthetic process"/>
    <property type="evidence" value="ECO:0007669"/>
    <property type="project" value="UniProtKB-UniPathway"/>
</dbReference>
<dbReference type="GO" id="GO:0043094">
    <property type="term" value="P:metabolic compound salvage"/>
    <property type="evidence" value="ECO:0007669"/>
    <property type="project" value="InterPro"/>
</dbReference>
<dbReference type="GO" id="GO:0009117">
    <property type="term" value="P:nucleotide metabolic process"/>
    <property type="evidence" value="ECO:0007669"/>
    <property type="project" value="InterPro"/>
</dbReference>
<dbReference type="CDD" id="cd16009">
    <property type="entry name" value="PPM"/>
    <property type="match status" value="1"/>
</dbReference>
<dbReference type="FunFam" id="3.30.70.1250:FF:000001">
    <property type="entry name" value="Phosphopentomutase"/>
    <property type="match status" value="1"/>
</dbReference>
<dbReference type="Gene3D" id="3.40.720.10">
    <property type="entry name" value="Alkaline Phosphatase, subunit A"/>
    <property type="match status" value="1"/>
</dbReference>
<dbReference type="Gene3D" id="3.30.70.1250">
    <property type="entry name" value="Phosphopentomutase"/>
    <property type="match status" value="1"/>
</dbReference>
<dbReference type="HAMAP" id="MF_00740">
    <property type="entry name" value="Phosphopentomut"/>
    <property type="match status" value="1"/>
</dbReference>
<dbReference type="InterPro" id="IPR017850">
    <property type="entry name" value="Alkaline_phosphatase_core_sf"/>
</dbReference>
<dbReference type="InterPro" id="IPR010045">
    <property type="entry name" value="DeoB"/>
</dbReference>
<dbReference type="InterPro" id="IPR006124">
    <property type="entry name" value="Metalloenzyme"/>
</dbReference>
<dbReference type="InterPro" id="IPR024052">
    <property type="entry name" value="Phosphopentomutase_DeoB_cap_sf"/>
</dbReference>
<dbReference type="NCBIfam" id="TIGR01696">
    <property type="entry name" value="deoB"/>
    <property type="match status" value="1"/>
</dbReference>
<dbReference type="NCBIfam" id="NF003766">
    <property type="entry name" value="PRK05362.1"/>
    <property type="match status" value="1"/>
</dbReference>
<dbReference type="PANTHER" id="PTHR21110">
    <property type="entry name" value="PHOSPHOPENTOMUTASE"/>
    <property type="match status" value="1"/>
</dbReference>
<dbReference type="PANTHER" id="PTHR21110:SF0">
    <property type="entry name" value="PHOSPHOPENTOMUTASE"/>
    <property type="match status" value="1"/>
</dbReference>
<dbReference type="Pfam" id="PF01676">
    <property type="entry name" value="Metalloenzyme"/>
    <property type="match status" value="1"/>
</dbReference>
<dbReference type="PIRSF" id="PIRSF001491">
    <property type="entry name" value="Ppentomutase"/>
    <property type="match status" value="1"/>
</dbReference>
<dbReference type="SUPFAM" id="SSF53649">
    <property type="entry name" value="Alkaline phosphatase-like"/>
    <property type="match status" value="1"/>
</dbReference>
<dbReference type="SUPFAM" id="SSF143856">
    <property type="entry name" value="DeoB insert domain-like"/>
    <property type="match status" value="1"/>
</dbReference>
<feature type="chain" id="PRO_1000133103" description="Phosphopentomutase">
    <location>
        <begin position="1"/>
        <end position="403"/>
    </location>
</feature>
<feature type="binding site" evidence="1">
    <location>
        <position position="13"/>
    </location>
    <ligand>
        <name>Mn(2+)</name>
        <dbReference type="ChEBI" id="CHEBI:29035"/>
        <label>1</label>
    </ligand>
</feature>
<feature type="binding site" evidence="1">
    <location>
        <position position="298"/>
    </location>
    <ligand>
        <name>Mn(2+)</name>
        <dbReference type="ChEBI" id="CHEBI:29035"/>
        <label>2</label>
    </ligand>
</feature>
<feature type="binding site" evidence="1">
    <location>
        <position position="303"/>
    </location>
    <ligand>
        <name>Mn(2+)</name>
        <dbReference type="ChEBI" id="CHEBI:29035"/>
        <label>2</label>
    </ligand>
</feature>
<feature type="binding site" evidence="1">
    <location>
        <position position="339"/>
    </location>
    <ligand>
        <name>Mn(2+)</name>
        <dbReference type="ChEBI" id="CHEBI:29035"/>
        <label>1</label>
    </ligand>
</feature>
<feature type="binding site" evidence="1">
    <location>
        <position position="340"/>
    </location>
    <ligand>
        <name>Mn(2+)</name>
        <dbReference type="ChEBI" id="CHEBI:29035"/>
        <label>1</label>
    </ligand>
</feature>
<feature type="binding site" evidence="1">
    <location>
        <position position="351"/>
    </location>
    <ligand>
        <name>Mn(2+)</name>
        <dbReference type="ChEBI" id="CHEBI:29035"/>
        <label>2</label>
    </ligand>
</feature>
<comment type="function">
    <text evidence="1">Isomerase that catalyzes the conversion of deoxy-ribose 1-phosphate (dRib-1-P) and ribose 1-phosphate (Rib-1-P) to deoxy-ribose 5-phosphate (dRib-5-P) and ribose 5-phosphate (Rib-5-P), respectively.</text>
</comment>
<comment type="catalytic activity">
    <reaction evidence="1">
        <text>2-deoxy-alpha-D-ribose 1-phosphate = 2-deoxy-D-ribose 5-phosphate</text>
        <dbReference type="Rhea" id="RHEA:27658"/>
        <dbReference type="ChEBI" id="CHEBI:57259"/>
        <dbReference type="ChEBI" id="CHEBI:62877"/>
        <dbReference type="EC" id="5.4.2.7"/>
    </reaction>
</comment>
<comment type="catalytic activity">
    <reaction evidence="1">
        <text>alpha-D-ribose 1-phosphate = D-ribose 5-phosphate</text>
        <dbReference type="Rhea" id="RHEA:18793"/>
        <dbReference type="ChEBI" id="CHEBI:57720"/>
        <dbReference type="ChEBI" id="CHEBI:78346"/>
        <dbReference type="EC" id="5.4.2.7"/>
    </reaction>
</comment>
<comment type="cofactor">
    <cofactor evidence="1">
        <name>Mn(2+)</name>
        <dbReference type="ChEBI" id="CHEBI:29035"/>
    </cofactor>
    <text evidence="1">Binds 2 manganese ions.</text>
</comment>
<comment type="pathway">
    <text evidence="1">Carbohydrate degradation; 2-deoxy-D-ribose 1-phosphate degradation; D-glyceraldehyde 3-phosphate and acetaldehyde from 2-deoxy-alpha-D-ribose 1-phosphate: step 1/2.</text>
</comment>
<comment type="subcellular location">
    <subcellularLocation>
        <location evidence="1">Cytoplasm</location>
    </subcellularLocation>
</comment>
<comment type="similarity">
    <text evidence="1">Belongs to the phosphopentomutase family.</text>
</comment>
<evidence type="ECO:0000255" key="1">
    <source>
        <dbReference type="HAMAP-Rule" id="MF_00740"/>
    </source>
</evidence>
<accession>B5E3K2</accession>
<name>DEOB_STRP4</name>
<keyword id="KW-0963">Cytoplasm</keyword>
<keyword id="KW-0413">Isomerase</keyword>
<keyword id="KW-0464">Manganese</keyword>
<keyword id="KW-0479">Metal-binding</keyword>